<reference key="1">
    <citation type="journal article" date="2005" name="Science">
        <title>The transcriptional landscape of the mammalian genome.</title>
        <authorList>
            <person name="Carninci P."/>
            <person name="Kasukawa T."/>
            <person name="Katayama S."/>
            <person name="Gough J."/>
            <person name="Frith M.C."/>
            <person name="Maeda N."/>
            <person name="Oyama R."/>
            <person name="Ravasi T."/>
            <person name="Lenhard B."/>
            <person name="Wells C."/>
            <person name="Kodzius R."/>
            <person name="Shimokawa K."/>
            <person name="Bajic V.B."/>
            <person name="Brenner S.E."/>
            <person name="Batalov S."/>
            <person name="Forrest A.R."/>
            <person name="Zavolan M."/>
            <person name="Davis M.J."/>
            <person name="Wilming L.G."/>
            <person name="Aidinis V."/>
            <person name="Allen J.E."/>
            <person name="Ambesi-Impiombato A."/>
            <person name="Apweiler R."/>
            <person name="Aturaliya R.N."/>
            <person name="Bailey T.L."/>
            <person name="Bansal M."/>
            <person name="Baxter L."/>
            <person name="Beisel K.W."/>
            <person name="Bersano T."/>
            <person name="Bono H."/>
            <person name="Chalk A.M."/>
            <person name="Chiu K.P."/>
            <person name="Choudhary V."/>
            <person name="Christoffels A."/>
            <person name="Clutterbuck D.R."/>
            <person name="Crowe M.L."/>
            <person name="Dalla E."/>
            <person name="Dalrymple B.P."/>
            <person name="de Bono B."/>
            <person name="Della Gatta G."/>
            <person name="di Bernardo D."/>
            <person name="Down T."/>
            <person name="Engstrom P."/>
            <person name="Fagiolini M."/>
            <person name="Faulkner G."/>
            <person name="Fletcher C.F."/>
            <person name="Fukushima T."/>
            <person name="Furuno M."/>
            <person name="Futaki S."/>
            <person name="Gariboldi M."/>
            <person name="Georgii-Hemming P."/>
            <person name="Gingeras T.R."/>
            <person name="Gojobori T."/>
            <person name="Green R.E."/>
            <person name="Gustincich S."/>
            <person name="Harbers M."/>
            <person name="Hayashi Y."/>
            <person name="Hensch T.K."/>
            <person name="Hirokawa N."/>
            <person name="Hill D."/>
            <person name="Huminiecki L."/>
            <person name="Iacono M."/>
            <person name="Ikeo K."/>
            <person name="Iwama A."/>
            <person name="Ishikawa T."/>
            <person name="Jakt M."/>
            <person name="Kanapin A."/>
            <person name="Katoh M."/>
            <person name="Kawasawa Y."/>
            <person name="Kelso J."/>
            <person name="Kitamura H."/>
            <person name="Kitano H."/>
            <person name="Kollias G."/>
            <person name="Krishnan S.P."/>
            <person name="Kruger A."/>
            <person name="Kummerfeld S.K."/>
            <person name="Kurochkin I.V."/>
            <person name="Lareau L.F."/>
            <person name="Lazarevic D."/>
            <person name="Lipovich L."/>
            <person name="Liu J."/>
            <person name="Liuni S."/>
            <person name="McWilliam S."/>
            <person name="Madan Babu M."/>
            <person name="Madera M."/>
            <person name="Marchionni L."/>
            <person name="Matsuda H."/>
            <person name="Matsuzawa S."/>
            <person name="Miki H."/>
            <person name="Mignone F."/>
            <person name="Miyake S."/>
            <person name="Morris K."/>
            <person name="Mottagui-Tabar S."/>
            <person name="Mulder N."/>
            <person name="Nakano N."/>
            <person name="Nakauchi H."/>
            <person name="Ng P."/>
            <person name="Nilsson R."/>
            <person name="Nishiguchi S."/>
            <person name="Nishikawa S."/>
            <person name="Nori F."/>
            <person name="Ohara O."/>
            <person name="Okazaki Y."/>
            <person name="Orlando V."/>
            <person name="Pang K.C."/>
            <person name="Pavan W.J."/>
            <person name="Pavesi G."/>
            <person name="Pesole G."/>
            <person name="Petrovsky N."/>
            <person name="Piazza S."/>
            <person name="Reed J."/>
            <person name="Reid J.F."/>
            <person name="Ring B.Z."/>
            <person name="Ringwald M."/>
            <person name="Rost B."/>
            <person name="Ruan Y."/>
            <person name="Salzberg S.L."/>
            <person name="Sandelin A."/>
            <person name="Schneider C."/>
            <person name="Schoenbach C."/>
            <person name="Sekiguchi K."/>
            <person name="Semple C.A."/>
            <person name="Seno S."/>
            <person name="Sessa L."/>
            <person name="Sheng Y."/>
            <person name="Shibata Y."/>
            <person name="Shimada H."/>
            <person name="Shimada K."/>
            <person name="Silva D."/>
            <person name="Sinclair B."/>
            <person name="Sperling S."/>
            <person name="Stupka E."/>
            <person name="Sugiura K."/>
            <person name="Sultana R."/>
            <person name="Takenaka Y."/>
            <person name="Taki K."/>
            <person name="Tammoja K."/>
            <person name="Tan S.L."/>
            <person name="Tang S."/>
            <person name="Taylor M.S."/>
            <person name="Tegner J."/>
            <person name="Teichmann S.A."/>
            <person name="Ueda H.R."/>
            <person name="van Nimwegen E."/>
            <person name="Verardo R."/>
            <person name="Wei C.L."/>
            <person name="Yagi K."/>
            <person name="Yamanishi H."/>
            <person name="Zabarovsky E."/>
            <person name="Zhu S."/>
            <person name="Zimmer A."/>
            <person name="Hide W."/>
            <person name="Bult C."/>
            <person name="Grimmond S.M."/>
            <person name="Teasdale R.D."/>
            <person name="Liu E.T."/>
            <person name="Brusic V."/>
            <person name="Quackenbush J."/>
            <person name="Wahlestedt C."/>
            <person name="Mattick J.S."/>
            <person name="Hume D.A."/>
            <person name="Kai C."/>
            <person name="Sasaki D."/>
            <person name="Tomaru Y."/>
            <person name="Fukuda S."/>
            <person name="Kanamori-Katayama M."/>
            <person name="Suzuki M."/>
            <person name="Aoki J."/>
            <person name="Arakawa T."/>
            <person name="Iida J."/>
            <person name="Imamura K."/>
            <person name="Itoh M."/>
            <person name="Kato T."/>
            <person name="Kawaji H."/>
            <person name="Kawagashira N."/>
            <person name="Kawashima T."/>
            <person name="Kojima M."/>
            <person name="Kondo S."/>
            <person name="Konno H."/>
            <person name="Nakano K."/>
            <person name="Ninomiya N."/>
            <person name="Nishio T."/>
            <person name="Okada M."/>
            <person name="Plessy C."/>
            <person name="Shibata K."/>
            <person name="Shiraki T."/>
            <person name="Suzuki S."/>
            <person name="Tagami M."/>
            <person name="Waki K."/>
            <person name="Watahiki A."/>
            <person name="Okamura-Oho Y."/>
            <person name="Suzuki H."/>
            <person name="Kawai J."/>
            <person name="Hayashizaki Y."/>
        </authorList>
    </citation>
    <scope>NUCLEOTIDE SEQUENCE [LARGE SCALE MRNA]</scope>
    <source>
        <strain>C57BL/6J</strain>
        <tissue>Embryonic stem cell</tissue>
        <tissue>Fetal spinal cord</tissue>
        <tissue>Pancreas</tissue>
    </source>
</reference>
<reference key="2">
    <citation type="journal article" date="2004" name="Genome Res.">
        <title>The status, quality, and expansion of the NIH full-length cDNA project: the Mammalian Gene Collection (MGC).</title>
        <authorList>
            <consortium name="The MGC Project Team"/>
        </authorList>
    </citation>
    <scope>NUCLEOTIDE SEQUENCE [LARGE SCALE MRNA]</scope>
    <source>
        <strain>Czech II</strain>
        <tissue>Mammary tumor</tissue>
        <tissue>Olfactory epithelium</tissue>
    </source>
</reference>
<reference key="3">
    <citation type="journal article" date="2010" name="Cell">
        <title>A tissue-specific atlas of mouse protein phosphorylation and expression.</title>
        <authorList>
            <person name="Huttlin E.L."/>
            <person name="Jedrychowski M.P."/>
            <person name="Elias J.E."/>
            <person name="Goswami T."/>
            <person name="Rad R."/>
            <person name="Beausoleil S.A."/>
            <person name="Villen J."/>
            <person name="Haas W."/>
            <person name="Sowa M.E."/>
            <person name="Gygi S.P."/>
        </authorList>
    </citation>
    <scope>IDENTIFICATION BY MASS SPECTROMETRY [LARGE SCALE ANALYSIS]</scope>
    <source>
        <tissue>Brain</tissue>
        <tissue>Brown adipose tissue</tissue>
        <tissue>Heart</tissue>
        <tissue>Kidney</tissue>
        <tissue>Liver</tissue>
        <tissue>Lung</tissue>
        <tissue>Spleen</tissue>
        <tissue>Testis</tissue>
    </source>
</reference>
<reference key="4">
    <citation type="journal article" date="2015" name="PLoS ONE">
        <title>TIPRL inhibits protein phosphatase 4 activity and promotes H2AX phosphorylation in the DNA damage response.</title>
        <authorList>
            <person name="Rosales K.R."/>
            <person name="Reid M.A."/>
            <person name="Yang Y."/>
            <person name="Tran T.Q."/>
            <person name="Wang W.I."/>
            <person name="Lowman X."/>
            <person name="Pan M."/>
            <person name="Kong M."/>
        </authorList>
    </citation>
    <scope>INTERACTION WITH PPP4C AND PPP4R2</scope>
</reference>
<dbReference type="EMBL" id="AK049119">
    <property type="protein sequence ID" value="BAC33553.1"/>
    <property type="molecule type" value="mRNA"/>
</dbReference>
<dbReference type="EMBL" id="AK049784">
    <property type="protein sequence ID" value="BAC33919.1"/>
    <property type="molecule type" value="mRNA"/>
</dbReference>
<dbReference type="EMBL" id="AK075774">
    <property type="protein sequence ID" value="BAC35948.1"/>
    <property type="molecule type" value="mRNA"/>
</dbReference>
<dbReference type="EMBL" id="BC002098">
    <property type="protein sequence ID" value="AAH02098.1"/>
    <property type="molecule type" value="mRNA"/>
</dbReference>
<dbReference type="EMBL" id="BC058250">
    <property type="protein sequence ID" value="AAH58250.1"/>
    <property type="molecule type" value="mRNA"/>
</dbReference>
<dbReference type="CCDS" id="CCDS15441.1"/>
<dbReference type="RefSeq" id="NP_663488.1">
    <property type="nucleotide sequence ID" value="NM_145513.4"/>
</dbReference>
<dbReference type="PDB" id="5W0W">
    <property type="method" value="X-ray"/>
    <property type="resolution" value="3.80 A"/>
    <property type="chains" value="B/E/H/K=12-259"/>
</dbReference>
<dbReference type="PDB" id="5W0X">
    <property type="method" value="X-ray"/>
    <property type="resolution" value="2.72 A"/>
    <property type="chains" value="A=12-259"/>
</dbReference>
<dbReference type="PDBsum" id="5W0W"/>
<dbReference type="PDBsum" id="5W0X"/>
<dbReference type="SMR" id="Q8BH58"/>
<dbReference type="BioGRID" id="230535">
    <property type="interactions" value="14"/>
</dbReference>
<dbReference type="FunCoup" id="Q8BH58">
    <property type="interactions" value="2835"/>
</dbReference>
<dbReference type="IntAct" id="Q8BH58">
    <property type="interactions" value="1"/>
</dbReference>
<dbReference type="MINT" id="Q8BH58"/>
<dbReference type="STRING" id="10090.ENSMUSP00000037514"/>
<dbReference type="GlyGen" id="Q8BH58">
    <property type="glycosylation" value="1 site, 1 O-linked glycan (1 site)"/>
</dbReference>
<dbReference type="iPTMnet" id="Q8BH58"/>
<dbReference type="PhosphoSitePlus" id="Q8BH58"/>
<dbReference type="SwissPalm" id="Q8BH58"/>
<dbReference type="jPOST" id="Q8BH58"/>
<dbReference type="PaxDb" id="10090-ENSMUSP00000037514"/>
<dbReference type="PeptideAtlas" id="Q8BH58"/>
<dbReference type="ProteomicsDB" id="259510"/>
<dbReference type="Pumba" id="Q8BH58"/>
<dbReference type="Antibodypedia" id="34349">
    <property type="antibodies" value="242 antibodies from 31 providers"/>
</dbReference>
<dbReference type="DNASU" id="226591"/>
<dbReference type="Ensembl" id="ENSMUST00000043235.8">
    <property type="protein sequence ID" value="ENSMUSP00000037514.6"/>
    <property type="gene ID" value="ENSMUSG00000040843.11"/>
</dbReference>
<dbReference type="GeneID" id="226591"/>
<dbReference type="KEGG" id="mmu:226591"/>
<dbReference type="UCSC" id="uc007diz.2">
    <property type="organism name" value="mouse"/>
</dbReference>
<dbReference type="AGR" id="MGI:1915087"/>
<dbReference type="CTD" id="261726"/>
<dbReference type="MGI" id="MGI:1915087">
    <property type="gene designation" value="Tiprl"/>
</dbReference>
<dbReference type="VEuPathDB" id="HostDB:ENSMUSG00000040843"/>
<dbReference type="eggNOG" id="KOG3224">
    <property type="taxonomic scope" value="Eukaryota"/>
</dbReference>
<dbReference type="GeneTree" id="ENSGT00390000006659"/>
<dbReference type="HOGENOM" id="CLU_039187_2_0_1"/>
<dbReference type="InParanoid" id="Q8BH58"/>
<dbReference type="OMA" id="DMILFED"/>
<dbReference type="OrthoDB" id="10253878at2759"/>
<dbReference type="PhylomeDB" id="Q8BH58"/>
<dbReference type="TreeFam" id="TF105943"/>
<dbReference type="BioGRID-ORCS" id="226591">
    <property type="hits" value="24 hits in 80 CRISPR screens"/>
</dbReference>
<dbReference type="ChiTaRS" id="Tiprl">
    <property type="organism name" value="mouse"/>
</dbReference>
<dbReference type="PRO" id="PR:Q8BH58"/>
<dbReference type="Proteomes" id="UP000000589">
    <property type="component" value="Chromosome 1"/>
</dbReference>
<dbReference type="RNAct" id="Q8BH58">
    <property type="molecule type" value="protein"/>
</dbReference>
<dbReference type="Bgee" id="ENSMUSG00000040843">
    <property type="expression patterns" value="Expressed in embryonic post-anal tail and 269 other cell types or tissues"/>
</dbReference>
<dbReference type="ExpressionAtlas" id="Q8BH58">
    <property type="expression patterns" value="baseline and differential"/>
</dbReference>
<dbReference type="GO" id="GO:0005737">
    <property type="term" value="C:cytoplasm"/>
    <property type="evidence" value="ECO:0007669"/>
    <property type="project" value="UniProtKB-SubCell"/>
</dbReference>
<dbReference type="GO" id="GO:0004864">
    <property type="term" value="F:protein phosphatase inhibitor activity"/>
    <property type="evidence" value="ECO:0007669"/>
    <property type="project" value="Ensembl"/>
</dbReference>
<dbReference type="GO" id="GO:0000077">
    <property type="term" value="P:DNA damage checkpoint signaling"/>
    <property type="evidence" value="ECO:0007669"/>
    <property type="project" value="Ensembl"/>
</dbReference>
<dbReference type="InterPro" id="IPR051330">
    <property type="entry name" value="Phosphatase_reg/MetRdx"/>
</dbReference>
<dbReference type="InterPro" id="IPR007303">
    <property type="entry name" value="TIP41-like"/>
</dbReference>
<dbReference type="PANTHER" id="PTHR21021">
    <property type="entry name" value="GAF/PUTATIVE CYTOSKELETAL PROTEIN"/>
    <property type="match status" value="1"/>
</dbReference>
<dbReference type="PANTHER" id="PTHR21021:SF16">
    <property type="entry name" value="TIP41-LIKE PROTEIN"/>
    <property type="match status" value="1"/>
</dbReference>
<dbReference type="Pfam" id="PF04176">
    <property type="entry name" value="TIP41"/>
    <property type="match status" value="1"/>
</dbReference>
<sequence length="271" mass="31254">MMIHGFQSSHQDFSFGPWKLTASKTHIMKSADVEKLADELHMPSLPEMMFGDNVLRIQHGSGFGIEFNATDALRCVNNYQGMLKVACAEEWQESRTEGEHSKEVIKPYDWTYTTDYKGTLLGESLKLKVVPTTDHIDTEKLKAREQIKFFEEVLLFEDELHDHGVSSLSVKIRVMPSSFFLLLRFFLRIDGVLIRMNDTRLYHEADKTYMLREYTSRESKIANLMHVPPSLFTEPNEISQYLPIKEAVCEKLVFPERIDPNPVDSQSTPSE</sequence>
<gene>
    <name type="primary">Tiprl</name>
</gene>
<accession>Q8BH58</accession>
<keyword id="KW-0002">3D-structure</keyword>
<keyword id="KW-0007">Acetylation</keyword>
<keyword id="KW-0963">Cytoplasm</keyword>
<keyword id="KW-0597">Phosphoprotein</keyword>
<keyword id="KW-1185">Reference proteome</keyword>
<feature type="chain" id="PRO_0000301854" description="TIP41-like protein">
    <location>
        <begin position="1"/>
        <end position="271"/>
    </location>
</feature>
<feature type="region of interest" description="Interaction with PPP2CA" evidence="1">
    <location>
        <begin position="173"/>
        <end position="271"/>
    </location>
</feature>
<feature type="modified residue" description="N6-acetyllysine" evidence="3">
    <location>
        <position position="106"/>
    </location>
</feature>
<feature type="modified residue" description="Phosphoserine" evidence="3">
    <location>
        <position position="265"/>
    </location>
</feature>
<feature type="modified residue" description="Phosphoserine" evidence="2">
    <location>
        <position position="270"/>
    </location>
</feature>
<feature type="strand" evidence="6">
    <location>
        <begin position="13"/>
        <end position="15"/>
    </location>
</feature>
<feature type="strand" evidence="6">
    <location>
        <begin position="18"/>
        <end position="23"/>
    </location>
</feature>
<feature type="helix" evidence="6">
    <location>
        <begin position="30"/>
        <end position="39"/>
    </location>
</feature>
<feature type="strand" evidence="6">
    <location>
        <begin position="47"/>
        <end position="49"/>
    </location>
</feature>
<feature type="strand" evidence="6">
    <location>
        <begin position="54"/>
        <end position="59"/>
    </location>
</feature>
<feature type="strand" evidence="6">
    <location>
        <begin position="64"/>
        <end position="68"/>
    </location>
</feature>
<feature type="helix" evidence="6">
    <location>
        <begin position="69"/>
        <end position="73"/>
    </location>
</feature>
<feature type="strand" evidence="6">
    <location>
        <begin position="119"/>
        <end position="121"/>
    </location>
</feature>
<feature type="strand" evidence="6">
    <location>
        <begin position="128"/>
        <end position="131"/>
    </location>
</feature>
<feature type="strand" evidence="6">
    <location>
        <begin position="148"/>
        <end position="158"/>
    </location>
</feature>
<feature type="helix" evidence="6">
    <location>
        <begin position="160"/>
        <end position="162"/>
    </location>
</feature>
<feature type="strand" evidence="6">
    <location>
        <begin position="163"/>
        <end position="174"/>
    </location>
</feature>
<feature type="strand" evidence="6">
    <location>
        <begin position="176"/>
        <end position="189"/>
    </location>
</feature>
<feature type="turn" evidence="6">
    <location>
        <begin position="190"/>
        <end position="192"/>
    </location>
</feature>
<feature type="strand" evidence="6">
    <location>
        <begin position="193"/>
        <end position="204"/>
    </location>
</feature>
<feature type="strand" evidence="6">
    <location>
        <begin position="208"/>
        <end position="220"/>
    </location>
</feature>
<feature type="helix" evidence="6">
    <location>
        <begin position="221"/>
        <end position="223"/>
    </location>
</feature>
<feature type="helix" evidence="6">
    <location>
        <begin position="229"/>
        <end position="233"/>
    </location>
</feature>
<feature type="helix" evidence="6">
    <location>
        <begin position="235"/>
        <end position="238"/>
    </location>
</feature>
<feature type="helix" evidence="6">
    <location>
        <begin position="239"/>
        <end position="241"/>
    </location>
</feature>
<feature type="strand" evidence="6">
    <location>
        <begin position="244"/>
        <end position="253"/>
    </location>
</feature>
<organism>
    <name type="scientific">Mus musculus</name>
    <name type="common">Mouse</name>
    <dbReference type="NCBI Taxonomy" id="10090"/>
    <lineage>
        <taxon>Eukaryota</taxon>
        <taxon>Metazoa</taxon>
        <taxon>Chordata</taxon>
        <taxon>Craniata</taxon>
        <taxon>Vertebrata</taxon>
        <taxon>Euteleostomi</taxon>
        <taxon>Mammalia</taxon>
        <taxon>Eutheria</taxon>
        <taxon>Euarchontoglires</taxon>
        <taxon>Glires</taxon>
        <taxon>Rodentia</taxon>
        <taxon>Myomorpha</taxon>
        <taxon>Muroidea</taxon>
        <taxon>Muridae</taxon>
        <taxon>Murinae</taxon>
        <taxon>Mus</taxon>
        <taxon>Mus</taxon>
    </lineage>
</organism>
<proteinExistence type="evidence at protein level"/>
<evidence type="ECO:0000250" key="1"/>
<evidence type="ECO:0000250" key="2">
    <source>
        <dbReference type="UniProtKB" id="A2VCX1"/>
    </source>
</evidence>
<evidence type="ECO:0000250" key="3">
    <source>
        <dbReference type="UniProtKB" id="O75663"/>
    </source>
</evidence>
<evidence type="ECO:0000269" key="4">
    <source>
    </source>
</evidence>
<evidence type="ECO:0000305" key="5"/>
<evidence type="ECO:0007829" key="6">
    <source>
        <dbReference type="PDB" id="5W0X"/>
    </source>
</evidence>
<protein>
    <recommendedName>
        <fullName>TIP41-like protein</fullName>
    </recommendedName>
</protein>
<comment type="function">
    <text evidence="3">May be a allosteric regulator of serine/threonine-protein phosphatase 2A (PP2A). Inhibits catalytic activity of the PP2A(D) core complex in vitro. The PP2A(C):TIPRL complex does not show phosphatase activity. Acts as a negative regulator of serine/threonine-protein phosphatase 4 probably by inhibiting the formation of the active PPP4C:PPP4R2 complex; the function is proposed to implicate it in DNA damage response by promoting H2AX phosphorylated on Ser-140 (gamma-H2AX). May play a role in the regulation of ATM/ATR signaling pathway controlling DNA replication and repair (By similarity).</text>
</comment>
<comment type="subunit">
    <text evidence="3 4">Interacts with PPP2CA. Interacts with PPP2CB, PPP4C and PPP6C. Interacts with IGBP1; the interaction is dependent on PPP2CA. Associates with a protein phosphatase 2A PP2A(C):IGBP1 complex (By similarity). Interacts with PPP4C and PPP4R2 (PubMed:26717153).</text>
</comment>
<comment type="subcellular location">
    <subcellularLocation>
        <location evidence="3">Cytoplasm</location>
    </subcellularLocation>
</comment>
<comment type="similarity">
    <text evidence="5">Belongs to the TIP41 family.</text>
</comment>
<name>TIPRL_MOUSE</name>